<reference key="1">
    <citation type="journal article" date="2004" name="Proc. Natl. Acad. Sci. U.S.A.">
        <title>Complete genomes of two clinical Staphylococcus aureus strains: evidence for the rapid evolution of virulence and drug resistance.</title>
        <authorList>
            <person name="Holden M.T.G."/>
            <person name="Feil E.J."/>
            <person name="Lindsay J.A."/>
            <person name="Peacock S.J."/>
            <person name="Day N.P.J."/>
            <person name="Enright M.C."/>
            <person name="Foster T.J."/>
            <person name="Moore C.E."/>
            <person name="Hurst L."/>
            <person name="Atkin R."/>
            <person name="Barron A."/>
            <person name="Bason N."/>
            <person name="Bentley S.D."/>
            <person name="Chillingworth C."/>
            <person name="Chillingworth T."/>
            <person name="Churcher C."/>
            <person name="Clark L."/>
            <person name="Corton C."/>
            <person name="Cronin A."/>
            <person name="Doggett J."/>
            <person name="Dowd L."/>
            <person name="Feltwell T."/>
            <person name="Hance Z."/>
            <person name="Harris B."/>
            <person name="Hauser H."/>
            <person name="Holroyd S."/>
            <person name="Jagels K."/>
            <person name="James K.D."/>
            <person name="Lennard N."/>
            <person name="Line A."/>
            <person name="Mayes R."/>
            <person name="Moule S."/>
            <person name="Mungall K."/>
            <person name="Ormond D."/>
            <person name="Quail M.A."/>
            <person name="Rabbinowitsch E."/>
            <person name="Rutherford K.M."/>
            <person name="Sanders M."/>
            <person name="Sharp S."/>
            <person name="Simmonds M."/>
            <person name="Stevens K."/>
            <person name="Whitehead S."/>
            <person name="Barrell B.G."/>
            <person name="Spratt B.G."/>
            <person name="Parkhill J."/>
        </authorList>
    </citation>
    <scope>NUCLEOTIDE SEQUENCE [LARGE SCALE GENOMIC DNA]</scope>
    <source>
        <strain>MSSA476</strain>
    </source>
</reference>
<protein>
    <recommendedName>
        <fullName evidence="1">Peptidase T</fullName>
        <ecNumber evidence="1">3.4.11.4</ecNumber>
    </recommendedName>
    <alternativeName>
        <fullName evidence="1">Aminotripeptidase</fullName>
        <shortName evidence="1">Tripeptidase</shortName>
    </alternativeName>
    <alternativeName>
        <fullName evidence="1">Tripeptide aminopeptidase</fullName>
    </alternativeName>
</protein>
<feature type="chain" id="PRO_0000185315" description="Peptidase T">
    <location>
        <begin position="1"/>
        <end position="408"/>
    </location>
</feature>
<feature type="region of interest" description="Disordered" evidence="2">
    <location>
        <begin position="1"/>
        <end position="28"/>
    </location>
</feature>
<feature type="compositionally biased region" description="Polar residues" evidence="2">
    <location>
        <begin position="11"/>
        <end position="28"/>
    </location>
</feature>
<feature type="active site" evidence="1">
    <location>
        <position position="80"/>
    </location>
</feature>
<feature type="active site" description="Proton acceptor" evidence="1">
    <location>
        <position position="174"/>
    </location>
</feature>
<feature type="binding site" evidence="1">
    <location>
        <position position="78"/>
    </location>
    <ligand>
        <name>Zn(2+)</name>
        <dbReference type="ChEBI" id="CHEBI:29105"/>
        <label>1</label>
    </ligand>
</feature>
<feature type="binding site" evidence="1">
    <location>
        <position position="140"/>
    </location>
    <ligand>
        <name>Zn(2+)</name>
        <dbReference type="ChEBI" id="CHEBI:29105"/>
        <label>1</label>
    </ligand>
</feature>
<feature type="binding site" evidence="1">
    <location>
        <position position="140"/>
    </location>
    <ligand>
        <name>Zn(2+)</name>
        <dbReference type="ChEBI" id="CHEBI:29105"/>
        <label>2</label>
    </ligand>
</feature>
<feature type="binding site" evidence="1">
    <location>
        <position position="175"/>
    </location>
    <ligand>
        <name>Zn(2+)</name>
        <dbReference type="ChEBI" id="CHEBI:29105"/>
        <label>2</label>
    </ligand>
</feature>
<feature type="binding site" evidence="1">
    <location>
        <position position="197"/>
    </location>
    <ligand>
        <name>Zn(2+)</name>
        <dbReference type="ChEBI" id="CHEBI:29105"/>
        <label>1</label>
    </ligand>
</feature>
<feature type="binding site" evidence="1">
    <location>
        <position position="379"/>
    </location>
    <ligand>
        <name>Zn(2+)</name>
        <dbReference type="ChEBI" id="CHEBI:29105"/>
        <label>2</label>
    </ligand>
</feature>
<proteinExistence type="inferred from homology"/>
<organism>
    <name type="scientific">Staphylococcus aureus (strain MSSA476)</name>
    <dbReference type="NCBI Taxonomy" id="282459"/>
    <lineage>
        <taxon>Bacteria</taxon>
        <taxon>Bacillati</taxon>
        <taxon>Bacillota</taxon>
        <taxon>Bacilli</taxon>
        <taxon>Bacillales</taxon>
        <taxon>Staphylococcaceae</taxon>
        <taxon>Staphylococcus</taxon>
    </lineage>
</organism>
<accession>Q6GB87</accession>
<name>PEPT_STAAS</name>
<sequence length="408" mass="45848">MKNQLIDRLTRYTTIDTQSDPKSTTTPSTEKQWDLLHLLEKELQQLGLPTDLDENGYLFATLESNIDVDVPTVGFLAHVDTSPDFNASNVKPQIIENYDGKPYKLGNTKRVLDPKVFPELNSLVGHTLMVTDGTSLLGADDKAGIVEIMEAICYLQEHPEIKHGTIRIGFTPDEEIGRGPHKFDVDRFNADFAYTMDGSQYGELQYESFNAAEAVITCHGVNVHPGSAKNAMVNAIRLGEQFDSLLPDSEVPERTEGYEGFYHLMNFEGTVEKATLQYIIRDHDKKQFELRKKRILEIRDDINAHFENYPVKVDISDQYFNMAEKILPLPHIIDIPKRVFAKLDIPANTEPIRGGTDGSQLSFMGLPTPNIFTGCGNFHGPYEYASIDVMEKAVQVIIGIVEDIAENH</sequence>
<comment type="function">
    <text evidence="1">Cleaves the N-terminal amino acid of tripeptides.</text>
</comment>
<comment type="catalytic activity">
    <reaction evidence="1">
        <text>Release of the N-terminal residue from a tripeptide.</text>
        <dbReference type="EC" id="3.4.11.4"/>
    </reaction>
</comment>
<comment type="cofactor">
    <cofactor evidence="1">
        <name>Zn(2+)</name>
        <dbReference type="ChEBI" id="CHEBI:29105"/>
    </cofactor>
    <text evidence="1">Binds 2 Zn(2+) ions per subunit.</text>
</comment>
<comment type="subcellular location">
    <subcellularLocation>
        <location evidence="1">Cytoplasm</location>
    </subcellularLocation>
</comment>
<comment type="similarity">
    <text evidence="1">Belongs to the peptidase M20B family.</text>
</comment>
<evidence type="ECO:0000255" key="1">
    <source>
        <dbReference type="HAMAP-Rule" id="MF_00550"/>
    </source>
</evidence>
<evidence type="ECO:0000256" key="2">
    <source>
        <dbReference type="SAM" id="MobiDB-lite"/>
    </source>
</evidence>
<gene>
    <name evidence="1" type="primary">pepT</name>
    <name type="ordered locus">SAS0708</name>
</gene>
<dbReference type="EC" id="3.4.11.4" evidence="1"/>
<dbReference type="EMBL" id="BX571857">
    <property type="protein sequence ID" value="CAG42484.1"/>
    <property type="molecule type" value="Genomic_DNA"/>
</dbReference>
<dbReference type="RefSeq" id="WP_000795826.1">
    <property type="nucleotide sequence ID" value="NC_002953.3"/>
</dbReference>
<dbReference type="SMR" id="Q6GB87"/>
<dbReference type="MEROPS" id="M20.003"/>
<dbReference type="KEGG" id="sas:SAS0708"/>
<dbReference type="HOGENOM" id="CLU_053676_0_0_9"/>
<dbReference type="GO" id="GO:0005829">
    <property type="term" value="C:cytosol"/>
    <property type="evidence" value="ECO:0007669"/>
    <property type="project" value="TreeGrafter"/>
</dbReference>
<dbReference type="GO" id="GO:0008237">
    <property type="term" value="F:metallopeptidase activity"/>
    <property type="evidence" value="ECO:0007669"/>
    <property type="project" value="UniProtKB-KW"/>
</dbReference>
<dbReference type="GO" id="GO:0045148">
    <property type="term" value="F:tripeptide aminopeptidase activity"/>
    <property type="evidence" value="ECO:0007669"/>
    <property type="project" value="UniProtKB-UniRule"/>
</dbReference>
<dbReference type="GO" id="GO:0008270">
    <property type="term" value="F:zinc ion binding"/>
    <property type="evidence" value="ECO:0007669"/>
    <property type="project" value="UniProtKB-UniRule"/>
</dbReference>
<dbReference type="GO" id="GO:0043171">
    <property type="term" value="P:peptide catabolic process"/>
    <property type="evidence" value="ECO:0007669"/>
    <property type="project" value="UniProtKB-UniRule"/>
</dbReference>
<dbReference type="GO" id="GO:0006508">
    <property type="term" value="P:proteolysis"/>
    <property type="evidence" value="ECO:0007669"/>
    <property type="project" value="UniProtKB-UniRule"/>
</dbReference>
<dbReference type="CDD" id="cd03892">
    <property type="entry name" value="M20_peptT"/>
    <property type="match status" value="1"/>
</dbReference>
<dbReference type="FunFam" id="3.30.70.360:FF:000002">
    <property type="entry name" value="Peptidase T"/>
    <property type="match status" value="1"/>
</dbReference>
<dbReference type="Gene3D" id="3.30.70.360">
    <property type="match status" value="1"/>
</dbReference>
<dbReference type="Gene3D" id="3.40.630.10">
    <property type="entry name" value="Zn peptidases"/>
    <property type="match status" value="1"/>
</dbReference>
<dbReference type="HAMAP" id="MF_00550">
    <property type="entry name" value="Aminopeptidase_M20"/>
    <property type="match status" value="1"/>
</dbReference>
<dbReference type="InterPro" id="IPR001261">
    <property type="entry name" value="ArgE/DapE_CS"/>
</dbReference>
<dbReference type="InterPro" id="IPR036264">
    <property type="entry name" value="Bact_exopeptidase_dim_dom"/>
</dbReference>
<dbReference type="InterPro" id="IPR002933">
    <property type="entry name" value="Peptidase_M20"/>
</dbReference>
<dbReference type="InterPro" id="IPR011650">
    <property type="entry name" value="Peptidase_M20_dimer"/>
</dbReference>
<dbReference type="InterPro" id="IPR010161">
    <property type="entry name" value="Peptidase_M20B"/>
</dbReference>
<dbReference type="NCBIfam" id="TIGR01882">
    <property type="entry name" value="peptidase-T"/>
    <property type="match status" value="1"/>
</dbReference>
<dbReference type="NCBIfam" id="NF003976">
    <property type="entry name" value="PRK05469.1"/>
    <property type="match status" value="1"/>
</dbReference>
<dbReference type="NCBIfam" id="NF009920">
    <property type="entry name" value="PRK13381.1"/>
    <property type="match status" value="1"/>
</dbReference>
<dbReference type="PANTHER" id="PTHR42994">
    <property type="entry name" value="PEPTIDASE T"/>
    <property type="match status" value="1"/>
</dbReference>
<dbReference type="PANTHER" id="PTHR42994:SF1">
    <property type="entry name" value="PEPTIDASE T"/>
    <property type="match status" value="1"/>
</dbReference>
<dbReference type="Pfam" id="PF07687">
    <property type="entry name" value="M20_dimer"/>
    <property type="match status" value="1"/>
</dbReference>
<dbReference type="Pfam" id="PF01546">
    <property type="entry name" value="Peptidase_M20"/>
    <property type="match status" value="1"/>
</dbReference>
<dbReference type="PIRSF" id="PIRSF037215">
    <property type="entry name" value="Peptidase_M20B"/>
    <property type="match status" value="1"/>
</dbReference>
<dbReference type="SUPFAM" id="SSF55031">
    <property type="entry name" value="Bacterial exopeptidase dimerisation domain"/>
    <property type="match status" value="1"/>
</dbReference>
<dbReference type="SUPFAM" id="SSF53187">
    <property type="entry name" value="Zn-dependent exopeptidases"/>
    <property type="match status" value="1"/>
</dbReference>
<dbReference type="PROSITE" id="PS00758">
    <property type="entry name" value="ARGE_DAPE_CPG2_1"/>
    <property type="match status" value="1"/>
</dbReference>
<dbReference type="PROSITE" id="PS00759">
    <property type="entry name" value="ARGE_DAPE_CPG2_2"/>
    <property type="match status" value="1"/>
</dbReference>
<keyword id="KW-0031">Aminopeptidase</keyword>
<keyword id="KW-0963">Cytoplasm</keyword>
<keyword id="KW-0378">Hydrolase</keyword>
<keyword id="KW-0479">Metal-binding</keyword>
<keyword id="KW-0482">Metalloprotease</keyword>
<keyword id="KW-0645">Protease</keyword>
<keyword id="KW-0862">Zinc</keyword>